<name>CH10_CLOBB</name>
<sequence length="94" mass="10233">MRIKPLGNRVVIKKLEAEEKTKSGIVLTGSAKEVPQEAEVVAVGPGSIVDGTKIEMEVKVGDKVLYSKYSGTEVKLDGEEYMILKQDDILAIVE</sequence>
<feature type="chain" id="PRO_1000129641" description="Co-chaperonin GroES">
    <location>
        <begin position="1"/>
        <end position="94"/>
    </location>
</feature>
<evidence type="ECO:0000255" key="1">
    <source>
        <dbReference type="HAMAP-Rule" id="MF_00580"/>
    </source>
</evidence>
<accession>B2TIX6</accession>
<comment type="function">
    <text evidence="1">Together with the chaperonin GroEL, plays an essential role in assisting protein folding. The GroEL-GroES system forms a nano-cage that allows encapsulation of the non-native substrate proteins and provides a physical environment optimized to promote and accelerate protein folding. GroES binds to the apical surface of the GroEL ring, thereby capping the opening of the GroEL channel.</text>
</comment>
<comment type="subunit">
    <text evidence="1">Heptamer of 7 subunits arranged in a ring. Interacts with the chaperonin GroEL.</text>
</comment>
<comment type="subcellular location">
    <subcellularLocation>
        <location evidence="1">Cytoplasm</location>
    </subcellularLocation>
</comment>
<comment type="similarity">
    <text evidence="1">Belongs to the GroES chaperonin family.</text>
</comment>
<reference key="1">
    <citation type="submission" date="2008-04" db="EMBL/GenBank/DDBJ databases">
        <title>Complete sequence of Clostridium botulinum strain Eklund.</title>
        <authorList>
            <person name="Brinkac L.M."/>
            <person name="Brown J.L."/>
            <person name="Bruce D."/>
            <person name="Detter C."/>
            <person name="Munk C."/>
            <person name="Smith L.A."/>
            <person name="Smith T.J."/>
            <person name="Sutton G."/>
            <person name="Brettin T.S."/>
        </authorList>
    </citation>
    <scope>NUCLEOTIDE SEQUENCE [LARGE SCALE GENOMIC DNA]</scope>
    <source>
        <strain>Eklund 17B / Type B</strain>
    </source>
</reference>
<organism>
    <name type="scientific">Clostridium botulinum (strain Eklund 17B / Type B)</name>
    <dbReference type="NCBI Taxonomy" id="935198"/>
    <lineage>
        <taxon>Bacteria</taxon>
        <taxon>Bacillati</taxon>
        <taxon>Bacillota</taxon>
        <taxon>Clostridia</taxon>
        <taxon>Eubacteriales</taxon>
        <taxon>Clostridiaceae</taxon>
        <taxon>Clostridium</taxon>
    </lineage>
</organism>
<keyword id="KW-0143">Chaperone</keyword>
<keyword id="KW-0963">Cytoplasm</keyword>
<dbReference type="EMBL" id="CP001056">
    <property type="protein sequence ID" value="ACD22810.1"/>
    <property type="molecule type" value="Genomic_DNA"/>
</dbReference>
<dbReference type="SMR" id="B2TIX6"/>
<dbReference type="KEGG" id="cbk:CLL_A0385"/>
<dbReference type="PATRIC" id="fig|935198.13.peg.361"/>
<dbReference type="HOGENOM" id="CLU_132825_2_0_9"/>
<dbReference type="Proteomes" id="UP000001195">
    <property type="component" value="Chromosome"/>
</dbReference>
<dbReference type="GO" id="GO:0005737">
    <property type="term" value="C:cytoplasm"/>
    <property type="evidence" value="ECO:0007669"/>
    <property type="project" value="UniProtKB-SubCell"/>
</dbReference>
<dbReference type="GO" id="GO:0005524">
    <property type="term" value="F:ATP binding"/>
    <property type="evidence" value="ECO:0007669"/>
    <property type="project" value="InterPro"/>
</dbReference>
<dbReference type="GO" id="GO:0046872">
    <property type="term" value="F:metal ion binding"/>
    <property type="evidence" value="ECO:0007669"/>
    <property type="project" value="TreeGrafter"/>
</dbReference>
<dbReference type="GO" id="GO:0044183">
    <property type="term" value="F:protein folding chaperone"/>
    <property type="evidence" value="ECO:0007669"/>
    <property type="project" value="InterPro"/>
</dbReference>
<dbReference type="GO" id="GO:0051087">
    <property type="term" value="F:protein-folding chaperone binding"/>
    <property type="evidence" value="ECO:0007669"/>
    <property type="project" value="TreeGrafter"/>
</dbReference>
<dbReference type="GO" id="GO:0051082">
    <property type="term" value="F:unfolded protein binding"/>
    <property type="evidence" value="ECO:0007669"/>
    <property type="project" value="TreeGrafter"/>
</dbReference>
<dbReference type="GO" id="GO:0051085">
    <property type="term" value="P:chaperone cofactor-dependent protein refolding"/>
    <property type="evidence" value="ECO:0007669"/>
    <property type="project" value="TreeGrafter"/>
</dbReference>
<dbReference type="CDD" id="cd00320">
    <property type="entry name" value="cpn10"/>
    <property type="match status" value="1"/>
</dbReference>
<dbReference type="FunFam" id="2.30.33.40:FF:000001">
    <property type="entry name" value="10 kDa chaperonin"/>
    <property type="match status" value="1"/>
</dbReference>
<dbReference type="Gene3D" id="2.30.33.40">
    <property type="entry name" value="GroES chaperonin"/>
    <property type="match status" value="1"/>
</dbReference>
<dbReference type="HAMAP" id="MF_00580">
    <property type="entry name" value="CH10"/>
    <property type="match status" value="1"/>
</dbReference>
<dbReference type="InterPro" id="IPR020818">
    <property type="entry name" value="Chaperonin_GroES"/>
</dbReference>
<dbReference type="InterPro" id="IPR037124">
    <property type="entry name" value="Chaperonin_GroES_sf"/>
</dbReference>
<dbReference type="InterPro" id="IPR018369">
    <property type="entry name" value="Chaprnonin_Cpn10_CS"/>
</dbReference>
<dbReference type="InterPro" id="IPR011032">
    <property type="entry name" value="GroES-like_sf"/>
</dbReference>
<dbReference type="NCBIfam" id="NF001531">
    <property type="entry name" value="PRK00364.2-2"/>
    <property type="match status" value="1"/>
</dbReference>
<dbReference type="NCBIfam" id="NF001533">
    <property type="entry name" value="PRK00364.2-4"/>
    <property type="match status" value="1"/>
</dbReference>
<dbReference type="NCBIfam" id="NF001534">
    <property type="entry name" value="PRK00364.2-5"/>
    <property type="match status" value="1"/>
</dbReference>
<dbReference type="PANTHER" id="PTHR10772">
    <property type="entry name" value="10 KDA HEAT SHOCK PROTEIN"/>
    <property type="match status" value="1"/>
</dbReference>
<dbReference type="PANTHER" id="PTHR10772:SF58">
    <property type="entry name" value="CO-CHAPERONIN GROES"/>
    <property type="match status" value="1"/>
</dbReference>
<dbReference type="Pfam" id="PF00166">
    <property type="entry name" value="Cpn10"/>
    <property type="match status" value="1"/>
</dbReference>
<dbReference type="PRINTS" id="PR00297">
    <property type="entry name" value="CHAPERONIN10"/>
</dbReference>
<dbReference type="SMART" id="SM00883">
    <property type="entry name" value="Cpn10"/>
    <property type="match status" value="1"/>
</dbReference>
<dbReference type="SUPFAM" id="SSF50129">
    <property type="entry name" value="GroES-like"/>
    <property type="match status" value="1"/>
</dbReference>
<dbReference type="PROSITE" id="PS00681">
    <property type="entry name" value="CHAPERONINS_CPN10"/>
    <property type="match status" value="1"/>
</dbReference>
<protein>
    <recommendedName>
        <fullName evidence="1">Co-chaperonin GroES</fullName>
    </recommendedName>
    <alternativeName>
        <fullName evidence="1">10 kDa chaperonin</fullName>
    </alternativeName>
    <alternativeName>
        <fullName evidence="1">Chaperonin-10</fullName>
        <shortName evidence="1">Cpn10</shortName>
    </alternativeName>
</protein>
<gene>
    <name evidence="1" type="primary">groES</name>
    <name evidence="1" type="synonym">groS</name>
    <name type="ordered locus">CLL_A0385</name>
</gene>
<proteinExistence type="inferred from homology"/>